<dbReference type="EMBL" id="BA000018">
    <property type="protein sequence ID" value="BAB42354.1"/>
    <property type="molecule type" value="Genomic_DNA"/>
</dbReference>
<dbReference type="PIR" id="F89899">
    <property type="entry name" value="F89899"/>
</dbReference>
<dbReference type="RefSeq" id="WP_001280006.1">
    <property type="nucleotide sequence ID" value="NC_002745.2"/>
</dbReference>
<dbReference type="SMR" id="P99130"/>
<dbReference type="EnsemblBacteria" id="BAB42354">
    <property type="protein sequence ID" value="BAB42354"/>
    <property type="gene ID" value="BAB42354"/>
</dbReference>
<dbReference type="KEGG" id="sau:SA1102"/>
<dbReference type="HOGENOM" id="CLU_073981_2_0_9"/>
<dbReference type="GO" id="GO:0005737">
    <property type="term" value="C:cytoplasm"/>
    <property type="evidence" value="ECO:0007669"/>
    <property type="project" value="UniProtKB-SubCell"/>
</dbReference>
<dbReference type="GO" id="GO:0043023">
    <property type="term" value="F:ribosomal large subunit binding"/>
    <property type="evidence" value="ECO:0007669"/>
    <property type="project" value="TreeGrafter"/>
</dbReference>
<dbReference type="GO" id="GO:0006415">
    <property type="term" value="P:translational termination"/>
    <property type="evidence" value="ECO:0007669"/>
    <property type="project" value="UniProtKB-UniRule"/>
</dbReference>
<dbReference type="CDD" id="cd00520">
    <property type="entry name" value="RRF"/>
    <property type="match status" value="1"/>
</dbReference>
<dbReference type="FunFam" id="1.10.132.20:FF:000001">
    <property type="entry name" value="Ribosome-recycling factor"/>
    <property type="match status" value="1"/>
</dbReference>
<dbReference type="FunFam" id="3.30.1360.40:FF:000001">
    <property type="entry name" value="Ribosome-recycling factor"/>
    <property type="match status" value="1"/>
</dbReference>
<dbReference type="Gene3D" id="3.30.1360.40">
    <property type="match status" value="1"/>
</dbReference>
<dbReference type="Gene3D" id="1.10.132.20">
    <property type="entry name" value="Ribosome-recycling factor"/>
    <property type="match status" value="1"/>
</dbReference>
<dbReference type="HAMAP" id="MF_00040">
    <property type="entry name" value="RRF"/>
    <property type="match status" value="1"/>
</dbReference>
<dbReference type="InterPro" id="IPR002661">
    <property type="entry name" value="Ribosome_recyc_fac"/>
</dbReference>
<dbReference type="InterPro" id="IPR023584">
    <property type="entry name" value="Ribosome_recyc_fac_dom"/>
</dbReference>
<dbReference type="InterPro" id="IPR036191">
    <property type="entry name" value="RRF_sf"/>
</dbReference>
<dbReference type="NCBIfam" id="TIGR00496">
    <property type="entry name" value="frr"/>
    <property type="match status" value="1"/>
</dbReference>
<dbReference type="PANTHER" id="PTHR20982:SF3">
    <property type="entry name" value="MITOCHONDRIAL RIBOSOME RECYCLING FACTOR PSEUDO 1"/>
    <property type="match status" value="1"/>
</dbReference>
<dbReference type="PANTHER" id="PTHR20982">
    <property type="entry name" value="RIBOSOME RECYCLING FACTOR"/>
    <property type="match status" value="1"/>
</dbReference>
<dbReference type="Pfam" id="PF01765">
    <property type="entry name" value="RRF"/>
    <property type="match status" value="1"/>
</dbReference>
<dbReference type="SUPFAM" id="SSF55194">
    <property type="entry name" value="Ribosome recycling factor, RRF"/>
    <property type="match status" value="1"/>
</dbReference>
<evidence type="ECO:0000255" key="1">
    <source>
        <dbReference type="HAMAP-Rule" id="MF_00040"/>
    </source>
</evidence>
<evidence type="ECO:0000256" key="2">
    <source>
        <dbReference type="SAM" id="MobiDB-lite"/>
    </source>
</evidence>
<protein>
    <recommendedName>
        <fullName evidence="1">Ribosome-recycling factor</fullName>
        <shortName evidence="1">RRF</shortName>
    </recommendedName>
    <alternativeName>
        <fullName evidence="1">Ribosome-releasing factor</fullName>
    </alternativeName>
</protein>
<proteinExistence type="evidence at protein level"/>
<accession>P99130</accession>
<accession>O33276</accession>
<sequence length="184" mass="20353">MSDIINETKSRMQKSIESLSRELANISAGRANSNLLNGVTVDYYGAPTPVQQLASINVPEARLLVISPYDKTSVADIEKAIIAANLGVNPTSDGEVIRIAVPALTEERRKERVKDVKKIGEEAKVSVRNIRRDMNDQLKKDEKNGDITEDELRSGTEDVQKATDNSIKEIDQMIADKEKDIMSV</sequence>
<feature type="chain" id="PRO_0000167540" description="Ribosome-recycling factor">
    <location>
        <begin position="1"/>
        <end position="184"/>
    </location>
</feature>
<feature type="region of interest" description="Disordered" evidence="2">
    <location>
        <begin position="134"/>
        <end position="167"/>
    </location>
</feature>
<comment type="function">
    <text evidence="1">Responsible for the release of ribosomes from messenger RNA at the termination of protein biosynthesis. May increase the efficiency of translation by recycling ribosomes from one round of translation to another.</text>
</comment>
<comment type="subcellular location">
    <subcellularLocation>
        <location evidence="1">Cytoplasm</location>
    </subcellularLocation>
</comment>
<comment type="similarity">
    <text evidence="1">Belongs to the RRF family.</text>
</comment>
<reference key="1">
    <citation type="journal article" date="2001" name="Lancet">
        <title>Whole genome sequencing of meticillin-resistant Staphylococcus aureus.</title>
        <authorList>
            <person name="Kuroda M."/>
            <person name="Ohta T."/>
            <person name="Uchiyama I."/>
            <person name="Baba T."/>
            <person name="Yuzawa H."/>
            <person name="Kobayashi I."/>
            <person name="Cui L."/>
            <person name="Oguchi A."/>
            <person name="Aoki K."/>
            <person name="Nagai Y."/>
            <person name="Lian J.-Q."/>
            <person name="Ito T."/>
            <person name="Kanamori M."/>
            <person name="Matsumaru H."/>
            <person name="Maruyama A."/>
            <person name="Murakami H."/>
            <person name="Hosoyama A."/>
            <person name="Mizutani-Ui Y."/>
            <person name="Takahashi N.K."/>
            <person name="Sawano T."/>
            <person name="Inoue R."/>
            <person name="Kaito C."/>
            <person name="Sekimizu K."/>
            <person name="Hirakawa H."/>
            <person name="Kuhara S."/>
            <person name="Goto S."/>
            <person name="Yabuzaki J."/>
            <person name="Kanehisa M."/>
            <person name="Yamashita A."/>
            <person name="Oshima K."/>
            <person name="Furuya K."/>
            <person name="Yoshino C."/>
            <person name="Shiba T."/>
            <person name="Hattori M."/>
            <person name="Ogasawara N."/>
            <person name="Hayashi H."/>
            <person name="Hiramatsu K."/>
        </authorList>
    </citation>
    <scope>NUCLEOTIDE SEQUENCE [LARGE SCALE GENOMIC DNA]</scope>
    <source>
        <strain>N315</strain>
    </source>
</reference>
<reference key="2">
    <citation type="journal article" date="2005" name="J. Microbiol. Methods">
        <title>Correlation of proteomic and transcriptomic profiles of Staphylococcus aureus during the post-exponential phase of growth.</title>
        <authorList>
            <person name="Scherl A."/>
            <person name="Francois P."/>
            <person name="Bento M."/>
            <person name="Deshusses J.M."/>
            <person name="Charbonnier Y."/>
            <person name="Converset V."/>
            <person name="Huyghe A."/>
            <person name="Walter N."/>
            <person name="Hoogland C."/>
            <person name="Appel R.D."/>
            <person name="Sanchez J.-C."/>
            <person name="Zimmermann-Ivol C.G."/>
            <person name="Corthals G.L."/>
            <person name="Hochstrasser D.F."/>
            <person name="Schrenzel J."/>
        </authorList>
    </citation>
    <scope>IDENTIFICATION BY MASS SPECTROMETRY</scope>
    <source>
        <strain>N315</strain>
    </source>
</reference>
<reference key="3">
    <citation type="submission" date="2007-10" db="UniProtKB">
        <title>Shotgun proteomic analysis of total and membrane protein extracts of S. aureus strain N315.</title>
        <authorList>
            <person name="Vaezzadeh A.R."/>
            <person name="Deshusses J."/>
            <person name="Lescuyer P."/>
            <person name="Hochstrasser D.F."/>
        </authorList>
    </citation>
    <scope>IDENTIFICATION BY MASS SPECTROMETRY [LARGE SCALE ANALYSIS]</scope>
    <source>
        <strain>N315</strain>
    </source>
</reference>
<keyword id="KW-0963">Cytoplasm</keyword>
<keyword id="KW-0648">Protein biosynthesis</keyword>
<gene>
    <name evidence="1" type="primary">frr</name>
    <name type="ordered locus">SA1102</name>
</gene>
<name>RRF_STAAN</name>
<organism>
    <name type="scientific">Staphylococcus aureus (strain N315)</name>
    <dbReference type="NCBI Taxonomy" id="158879"/>
    <lineage>
        <taxon>Bacteria</taxon>
        <taxon>Bacillati</taxon>
        <taxon>Bacillota</taxon>
        <taxon>Bacilli</taxon>
        <taxon>Bacillales</taxon>
        <taxon>Staphylococcaceae</taxon>
        <taxon>Staphylococcus</taxon>
    </lineage>
</organism>